<sequence length="307" mass="32744">MSKHVAVLMGGWSSEREISLRSGNACAAALEGEGYRVTRVDVGPDIATVLTELRPDAALNALHGPAGEDGTIQGLLEILKIPYTHSGVLASALAMHKERAKTVMRAAGVSVPEGRVVNRHDAAKSHPLTPPYVVKPIAEGSSMGVIIVRDERSHPPQILASDEWVYGEEVLAETYVAGRELTCAVLGDRALGVTEIKPVSGEWYDFDAKYAGGGSIHVLPADLKLNIYQRVQELALTAHQALGCRGVSRADLRYDDTPGGTGALVVLEVNTQPGMTQTSLVPEIAAHAGQSFGELVRWMVEDASLNR</sequence>
<name>DDL_METC4</name>
<accession>B7KSC6</accession>
<proteinExistence type="inferred from homology"/>
<comment type="function">
    <text evidence="2">Cell wall formation.</text>
</comment>
<comment type="catalytic activity">
    <reaction evidence="2">
        <text>2 D-alanine + ATP = D-alanyl-D-alanine + ADP + phosphate + H(+)</text>
        <dbReference type="Rhea" id="RHEA:11224"/>
        <dbReference type="ChEBI" id="CHEBI:15378"/>
        <dbReference type="ChEBI" id="CHEBI:30616"/>
        <dbReference type="ChEBI" id="CHEBI:43474"/>
        <dbReference type="ChEBI" id="CHEBI:57416"/>
        <dbReference type="ChEBI" id="CHEBI:57822"/>
        <dbReference type="ChEBI" id="CHEBI:456216"/>
        <dbReference type="EC" id="6.3.2.4"/>
    </reaction>
</comment>
<comment type="cofactor">
    <cofactor evidence="1">
        <name>Mg(2+)</name>
        <dbReference type="ChEBI" id="CHEBI:18420"/>
    </cofactor>
    <cofactor evidence="1">
        <name>Mn(2+)</name>
        <dbReference type="ChEBI" id="CHEBI:29035"/>
    </cofactor>
    <text evidence="1">Binds 2 magnesium or manganese ions per subunit.</text>
</comment>
<comment type="pathway">
    <text evidence="2">Cell wall biogenesis; peptidoglycan biosynthesis.</text>
</comment>
<comment type="subcellular location">
    <subcellularLocation>
        <location evidence="2">Cytoplasm</location>
    </subcellularLocation>
</comment>
<comment type="similarity">
    <text evidence="2">Belongs to the D-alanine--D-alanine ligase family.</text>
</comment>
<feature type="chain" id="PRO_1000189740" description="D-alanine--D-alanine ligase">
    <location>
        <begin position="1"/>
        <end position="307"/>
    </location>
</feature>
<feature type="domain" description="ATP-grasp" evidence="2">
    <location>
        <begin position="101"/>
        <end position="301"/>
    </location>
</feature>
<feature type="binding site" evidence="2">
    <location>
        <begin position="127"/>
        <end position="182"/>
    </location>
    <ligand>
        <name>ATP</name>
        <dbReference type="ChEBI" id="CHEBI:30616"/>
    </ligand>
</feature>
<feature type="binding site" evidence="2">
    <location>
        <position position="251"/>
    </location>
    <ligand>
        <name>Mg(2+)</name>
        <dbReference type="ChEBI" id="CHEBI:18420"/>
        <label>1</label>
    </ligand>
</feature>
<feature type="binding site" evidence="2">
    <location>
        <position position="268"/>
    </location>
    <ligand>
        <name>Mg(2+)</name>
        <dbReference type="ChEBI" id="CHEBI:18420"/>
        <label>1</label>
    </ligand>
</feature>
<feature type="binding site" evidence="2">
    <location>
        <position position="268"/>
    </location>
    <ligand>
        <name>Mg(2+)</name>
        <dbReference type="ChEBI" id="CHEBI:18420"/>
        <label>2</label>
    </ligand>
</feature>
<feature type="binding site" evidence="2">
    <location>
        <position position="270"/>
    </location>
    <ligand>
        <name>Mg(2+)</name>
        <dbReference type="ChEBI" id="CHEBI:18420"/>
        <label>2</label>
    </ligand>
</feature>
<keyword id="KW-0067">ATP-binding</keyword>
<keyword id="KW-0133">Cell shape</keyword>
<keyword id="KW-0961">Cell wall biogenesis/degradation</keyword>
<keyword id="KW-0963">Cytoplasm</keyword>
<keyword id="KW-0436">Ligase</keyword>
<keyword id="KW-0460">Magnesium</keyword>
<keyword id="KW-0464">Manganese</keyword>
<keyword id="KW-0479">Metal-binding</keyword>
<keyword id="KW-0547">Nucleotide-binding</keyword>
<keyword id="KW-0573">Peptidoglycan synthesis</keyword>
<protein>
    <recommendedName>
        <fullName evidence="2">D-alanine--D-alanine ligase</fullName>
        <ecNumber evidence="2">6.3.2.4</ecNumber>
    </recommendedName>
    <alternativeName>
        <fullName evidence="2">D-Ala-D-Ala ligase</fullName>
    </alternativeName>
    <alternativeName>
        <fullName evidence="2">D-alanylalanine synthetase</fullName>
    </alternativeName>
</protein>
<organism>
    <name type="scientific">Methylorubrum extorquens (strain CM4 / NCIMB 13688)</name>
    <name type="common">Methylobacterium extorquens</name>
    <dbReference type="NCBI Taxonomy" id="440085"/>
    <lineage>
        <taxon>Bacteria</taxon>
        <taxon>Pseudomonadati</taxon>
        <taxon>Pseudomonadota</taxon>
        <taxon>Alphaproteobacteria</taxon>
        <taxon>Hyphomicrobiales</taxon>
        <taxon>Methylobacteriaceae</taxon>
        <taxon>Methylorubrum</taxon>
    </lineage>
</organism>
<reference key="1">
    <citation type="submission" date="2008-12" db="EMBL/GenBank/DDBJ databases">
        <title>Complete sequence of chromosome of Methylobacterium chloromethanicum CM4.</title>
        <authorList>
            <consortium name="US DOE Joint Genome Institute"/>
            <person name="Lucas S."/>
            <person name="Copeland A."/>
            <person name="Lapidus A."/>
            <person name="Glavina del Rio T."/>
            <person name="Dalin E."/>
            <person name="Tice H."/>
            <person name="Bruce D."/>
            <person name="Goodwin L."/>
            <person name="Pitluck S."/>
            <person name="Chertkov O."/>
            <person name="Brettin T."/>
            <person name="Detter J.C."/>
            <person name="Han C."/>
            <person name="Larimer F."/>
            <person name="Land M."/>
            <person name="Hauser L."/>
            <person name="Kyrpides N."/>
            <person name="Mikhailova N."/>
            <person name="Marx C."/>
            <person name="Richardson P."/>
        </authorList>
    </citation>
    <scope>NUCLEOTIDE SEQUENCE [LARGE SCALE GENOMIC DNA]</scope>
    <source>
        <strain>CM4 / NCIMB 13688</strain>
    </source>
</reference>
<dbReference type="EC" id="6.3.2.4" evidence="2"/>
<dbReference type="EMBL" id="CP001298">
    <property type="protein sequence ID" value="ACK84011.1"/>
    <property type="molecule type" value="Genomic_DNA"/>
</dbReference>
<dbReference type="RefSeq" id="WP_015951361.1">
    <property type="nucleotide sequence ID" value="NC_011757.1"/>
</dbReference>
<dbReference type="SMR" id="B7KSC6"/>
<dbReference type="KEGG" id="mch:Mchl_3173"/>
<dbReference type="HOGENOM" id="CLU_039268_1_1_5"/>
<dbReference type="UniPathway" id="UPA00219"/>
<dbReference type="Proteomes" id="UP000002385">
    <property type="component" value="Chromosome"/>
</dbReference>
<dbReference type="GO" id="GO:0005737">
    <property type="term" value="C:cytoplasm"/>
    <property type="evidence" value="ECO:0007669"/>
    <property type="project" value="UniProtKB-SubCell"/>
</dbReference>
<dbReference type="GO" id="GO:0005524">
    <property type="term" value="F:ATP binding"/>
    <property type="evidence" value="ECO:0007669"/>
    <property type="project" value="UniProtKB-KW"/>
</dbReference>
<dbReference type="GO" id="GO:0008716">
    <property type="term" value="F:D-alanine-D-alanine ligase activity"/>
    <property type="evidence" value="ECO:0007669"/>
    <property type="project" value="UniProtKB-UniRule"/>
</dbReference>
<dbReference type="GO" id="GO:0046872">
    <property type="term" value="F:metal ion binding"/>
    <property type="evidence" value="ECO:0007669"/>
    <property type="project" value="UniProtKB-KW"/>
</dbReference>
<dbReference type="GO" id="GO:0071555">
    <property type="term" value="P:cell wall organization"/>
    <property type="evidence" value="ECO:0007669"/>
    <property type="project" value="UniProtKB-KW"/>
</dbReference>
<dbReference type="GO" id="GO:0009252">
    <property type="term" value="P:peptidoglycan biosynthetic process"/>
    <property type="evidence" value="ECO:0007669"/>
    <property type="project" value="UniProtKB-UniRule"/>
</dbReference>
<dbReference type="GO" id="GO:0008360">
    <property type="term" value="P:regulation of cell shape"/>
    <property type="evidence" value="ECO:0007669"/>
    <property type="project" value="UniProtKB-KW"/>
</dbReference>
<dbReference type="Gene3D" id="3.40.50.20">
    <property type="match status" value="1"/>
</dbReference>
<dbReference type="Gene3D" id="3.30.1490.20">
    <property type="entry name" value="ATP-grasp fold, A domain"/>
    <property type="match status" value="1"/>
</dbReference>
<dbReference type="Gene3D" id="3.30.470.20">
    <property type="entry name" value="ATP-grasp fold, B domain"/>
    <property type="match status" value="1"/>
</dbReference>
<dbReference type="HAMAP" id="MF_00047">
    <property type="entry name" value="Dala_Dala_lig"/>
    <property type="match status" value="1"/>
</dbReference>
<dbReference type="InterPro" id="IPR011761">
    <property type="entry name" value="ATP-grasp"/>
</dbReference>
<dbReference type="InterPro" id="IPR013815">
    <property type="entry name" value="ATP_grasp_subdomain_1"/>
</dbReference>
<dbReference type="InterPro" id="IPR000291">
    <property type="entry name" value="D-Ala_lig_Van_CS"/>
</dbReference>
<dbReference type="InterPro" id="IPR005905">
    <property type="entry name" value="D_ala_D_ala"/>
</dbReference>
<dbReference type="InterPro" id="IPR011095">
    <property type="entry name" value="Dala_Dala_lig_C"/>
</dbReference>
<dbReference type="InterPro" id="IPR011127">
    <property type="entry name" value="Dala_Dala_lig_N"/>
</dbReference>
<dbReference type="InterPro" id="IPR016185">
    <property type="entry name" value="PreATP-grasp_dom_sf"/>
</dbReference>
<dbReference type="NCBIfam" id="TIGR01205">
    <property type="entry name" value="D_ala_D_alaTIGR"/>
    <property type="match status" value="1"/>
</dbReference>
<dbReference type="NCBIfam" id="NF002378">
    <property type="entry name" value="PRK01372.1"/>
    <property type="match status" value="1"/>
</dbReference>
<dbReference type="PANTHER" id="PTHR23132">
    <property type="entry name" value="D-ALANINE--D-ALANINE LIGASE"/>
    <property type="match status" value="1"/>
</dbReference>
<dbReference type="PANTHER" id="PTHR23132:SF23">
    <property type="entry name" value="D-ALANINE--D-ALANINE LIGASE B"/>
    <property type="match status" value="1"/>
</dbReference>
<dbReference type="Pfam" id="PF07478">
    <property type="entry name" value="Dala_Dala_lig_C"/>
    <property type="match status" value="1"/>
</dbReference>
<dbReference type="Pfam" id="PF01820">
    <property type="entry name" value="Dala_Dala_lig_N"/>
    <property type="match status" value="1"/>
</dbReference>
<dbReference type="PIRSF" id="PIRSF039102">
    <property type="entry name" value="Ddl/VanB"/>
    <property type="match status" value="1"/>
</dbReference>
<dbReference type="SUPFAM" id="SSF56059">
    <property type="entry name" value="Glutathione synthetase ATP-binding domain-like"/>
    <property type="match status" value="1"/>
</dbReference>
<dbReference type="SUPFAM" id="SSF52440">
    <property type="entry name" value="PreATP-grasp domain"/>
    <property type="match status" value="1"/>
</dbReference>
<dbReference type="PROSITE" id="PS50975">
    <property type="entry name" value="ATP_GRASP"/>
    <property type="match status" value="1"/>
</dbReference>
<dbReference type="PROSITE" id="PS00843">
    <property type="entry name" value="DALA_DALA_LIGASE_1"/>
    <property type="match status" value="1"/>
</dbReference>
<dbReference type="PROSITE" id="PS00844">
    <property type="entry name" value="DALA_DALA_LIGASE_2"/>
    <property type="match status" value="1"/>
</dbReference>
<evidence type="ECO:0000250" key="1"/>
<evidence type="ECO:0000255" key="2">
    <source>
        <dbReference type="HAMAP-Rule" id="MF_00047"/>
    </source>
</evidence>
<gene>
    <name evidence="2" type="primary">ddl</name>
    <name type="ordered locus">Mchl_3173</name>
</gene>